<proteinExistence type="evidence at protein level"/>
<accession>O82521</accession>
<accession>A0A2G3CTB3</accession>
<accession>A0A6J3ZXX9</accession>
<sequence length="459" mass="50769">MANITNEFMGHDMLAPFTAGWQSDMEPLVIEKSEGSYVYDINGKKYLDTLSGLWCATLGGSETRLVEAANKQLNTLPFYHSFWNRTTKPSLDLAKELLNMFTANKMAKVFFTNSGSEANDTQVKLVWYYNNALGRPQKKKIIARAKAYHGSTYISAGLSGLPPMHQKFDLPPPFVLHTECPHYWAYHLPGETEEEFSTRLANNLESLILKEGPETVAAFIAEPVLGAAGVILPPATYFDKVQTILRKYDILFIADEVVCGFGRLGTMFGGDKYNIKPDLVSVAKALSSGYMPIAAVLVSQKISSVILSESNKIGAFCHGFTYSGHPVACAVALEALKIYKERNITEVVNKISQKFQEGLKAFADSPIIGEIRGTGLALSTEFVDNKSPNDPFPYEWAVGTYFGAQCAKYGMLVSSTGDHVNMAPPFMLSLEELDELIRIYGKALKDTEKRVEELKSQKK</sequence>
<reference key="1">
    <citation type="journal article" date="1998" name="Plant Physiol.">
        <title>Nucleotide Sequence of a Probable Aminotransferase Gene (Accession No. AF085149) from Habanero Chile. (PGR98-182).</title>
        <authorList>
            <person name="Aluru M."/>
            <person name="Curry J."/>
            <person name="O'Connell M."/>
        </authorList>
    </citation>
    <scope>NUCLEOTIDE SEQUENCE [MRNA]</scope>
    <scope>TISSUE SPECIFICITY</scope>
    <source>
        <strain>cv. Habanero</strain>
    </source>
</reference>
<reference key="2">
    <citation type="journal article" date="2015" name="Mol. Breed.">
        <title>Multiple loss-of-function putative aminotransferase alleles contribute to low pungency and capsinoid biosynthesis in Capsicum chinense.</title>
        <authorList>
            <person name="Tanaka Y."/>
            <person name="Sonoyama T."/>
            <person name="Muraga Y."/>
            <person name="Koeda S."/>
            <person name="Goto T."/>
            <person name="Yoshida Y."/>
            <person name="Yasuba K."/>
        </authorList>
    </citation>
    <scope>NUCLEOTIDE SEQUENCE [GENOMIC DNA]</scope>
    <scope>FUNCTION</scope>
    <scope>DISRUPTION PHENOTYPE</scope>
</reference>
<reference key="3">
    <citation type="journal article" date="2019" name="Plant J.">
        <title>Positional differences of intronic transposons in pAMT affect the pungency level in chili pepper through altered splicing efficiency.</title>
        <authorList>
            <person name="Tanaka Y."/>
            <person name="Asano T."/>
            <person name="Kanemitsu Y."/>
            <person name="Goto T."/>
            <person name="Yoshida Y."/>
            <person name="Yasuba K."/>
            <person name="Misawa Y."/>
            <person name="Nakatani S."/>
            <person name="Kobata K."/>
        </authorList>
    </citation>
    <scope>NUCLEOTIDE SEQUENCE [GENOMIC DNA]</scope>
    <scope>FUNCTION</scope>
</reference>
<reference key="4">
    <citation type="journal article" date="2017" name="Genome Biol.">
        <title>New reference genome sequences of hot pepper reveal the massive evolution of plant disease-resistance genes by retroduplication.</title>
        <authorList>
            <person name="Kim S."/>
            <person name="Park J."/>
            <person name="Yeom S.I."/>
            <person name="Kim Y.M."/>
            <person name="Seo E."/>
            <person name="Kim K.T."/>
            <person name="Kim M.S."/>
            <person name="Lee J.M."/>
            <person name="Cheong K."/>
            <person name="Shin H.S."/>
            <person name="Kim S.B."/>
            <person name="Han K."/>
            <person name="Lee J."/>
            <person name="Park M."/>
            <person name="Lee H.A."/>
            <person name="Lee H.Y."/>
            <person name="Lee Y."/>
            <person name="Oh S."/>
            <person name="Lee J.H."/>
            <person name="Choi E."/>
            <person name="Choi E."/>
            <person name="Lee S.E."/>
            <person name="Jeon J."/>
            <person name="Kim H."/>
            <person name="Choi G."/>
            <person name="Song H."/>
            <person name="Lee J."/>
            <person name="Lee S.C."/>
            <person name="Kwon J.K."/>
            <person name="Lee H.Y."/>
            <person name="Koo N."/>
            <person name="Hong Y."/>
            <person name="Kim R.W."/>
            <person name="Kang W.H."/>
            <person name="Huh J.H."/>
            <person name="Kang B.C."/>
            <person name="Yang T.J."/>
            <person name="Lee Y.H."/>
            <person name="Bennetzen J.L."/>
            <person name="Choi D."/>
        </authorList>
    </citation>
    <scope>NUCLEOTIDE SEQUENCE [LARGE SCALE GENOMIC DNA]</scope>
    <source>
        <strain>cv. PI159236</strain>
    </source>
</reference>
<reference key="5">
    <citation type="journal article" date="2009" name="Plant J.">
        <title>Functional loss of pAMT results in biosynthesis of capsinoids, capsaicinoid analogs, in Capsicum annuum cv. CH-19 Sweet.</title>
        <authorList>
            <person name="Lang Y."/>
            <person name="Kisaka H."/>
            <person name="Sugiyama R."/>
            <person name="Nomura K."/>
            <person name="Morita A."/>
            <person name="Watanabe T."/>
            <person name="Tanaka Y."/>
            <person name="Yazawa S."/>
            <person name="Miwa T."/>
        </authorList>
    </citation>
    <scope>DISRUPTION PHENOTYPE</scope>
</reference>
<reference key="6">
    <citation type="journal article" date="2010" name="J. Agric. Food Chem.">
        <title>Novel loss-of-function putative aminotransferase alleles cause biosynthesis of capsinoids, nonpungent capsaicinoid analogues, in mildly pungent chili peppers (Capsicum chinense).</title>
        <authorList>
            <person name="Tanaka Y."/>
            <person name="Hosokawa M."/>
            <person name="Miwa T."/>
            <person name="Watanabe T."/>
            <person name="Yazawa S."/>
        </authorList>
    </citation>
    <scope>DISRUPTION PHENOTYPE</scope>
</reference>
<reference key="7">
    <citation type="journal article" date="2014" name="BMC Biotechnol.">
        <title>Biocatalytic potential of vanillin aminotransferase from Capsicum chinense.</title>
        <authorList>
            <person name="Weber N."/>
            <person name="Ismail A."/>
            <person name="Gorwa-Grauslund M."/>
            <person name="Carlquist M."/>
        </authorList>
    </citation>
    <scope>FUNCTION</scope>
    <scope>CATALYTIC ACTIVITY</scope>
    <scope>BIOPHYSICOCHEMICAL PROPERTIES</scope>
    <scope>PATHWAY</scope>
</reference>
<evidence type="ECO:0000250" key="1">
    <source>
        <dbReference type="UniProtKB" id="P12995"/>
    </source>
</evidence>
<evidence type="ECO:0000255" key="2"/>
<evidence type="ECO:0000269" key="3">
    <source>
    </source>
</evidence>
<evidence type="ECO:0000269" key="4">
    <source>
    </source>
</evidence>
<evidence type="ECO:0000269" key="5">
    <source>
    </source>
</evidence>
<evidence type="ECO:0000269" key="6">
    <source>
    </source>
</evidence>
<evidence type="ECO:0000269" key="7">
    <source ref="1"/>
</evidence>
<evidence type="ECO:0000269" key="8">
    <source ref="2"/>
</evidence>
<evidence type="ECO:0000303" key="9">
    <source>
    </source>
</evidence>
<evidence type="ECO:0000303" key="10">
    <source ref="1"/>
</evidence>
<evidence type="ECO:0000305" key="11"/>
<feature type="chain" id="PRO_0000451917" description="Vanillin aminotransferase">
    <location>
        <begin position="1"/>
        <end position="459"/>
    </location>
</feature>
<feature type="coiled-coil region" evidence="2">
    <location>
        <begin position="428"/>
        <end position="459"/>
    </location>
</feature>
<feature type="binding site" evidence="1">
    <location>
        <begin position="115"/>
        <end position="116"/>
    </location>
    <ligand>
        <name>pyridoxal 5'-phosphate</name>
        <dbReference type="ChEBI" id="CHEBI:597326"/>
    </ligand>
</feature>
<feature type="binding site" evidence="1">
    <location>
        <position position="255"/>
    </location>
    <ligand>
        <name>pyridoxal 5'-phosphate</name>
        <dbReference type="ChEBI" id="CHEBI:597326"/>
    </ligand>
</feature>
<feature type="binding site" evidence="1">
    <location>
        <begin position="320"/>
        <end position="321"/>
    </location>
    <ligand>
        <name>pyridoxal 5'-phosphate</name>
        <dbReference type="ChEBI" id="CHEBI:597326"/>
    </ligand>
</feature>
<feature type="modified residue" description="N6-(pyridoxal phosphate)lysine" evidence="1">
    <location>
        <position position="284"/>
    </location>
</feature>
<feature type="sequence conflict" description="In Ref. 1; AAC78480 and 2; BAU36962." evidence="11" ref="1 2">
    <original>L</original>
    <variation>M</variation>
    <location>
        <position position="125"/>
    </location>
</feature>
<feature type="sequence conflict" description="In Ref. 1; AAC78480 and 2; BAU36962." evidence="11" ref="1 2">
    <original>T</original>
    <variation>A</variation>
    <location>
        <position position="243"/>
    </location>
</feature>
<feature type="sequence conflict" description="In Ref. 1; AAC78480 and 2; BAU36962." evidence="11" ref="1 2">
    <original>Y</original>
    <variation>H</variation>
    <location>
        <position position="248"/>
    </location>
</feature>
<feature type="sequence conflict" description="In Ref. 1; AAC78480, 2; BAU36962 and 3; BBK20873/BBK20874." evidence="11" ref="1 2 3">
    <original>G</original>
    <variation>S</variation>
    <location>
        <position position="270"/>
    </location>
</feature>
<feature type="sequence conflict" description="In Ref. 1; AAC78480 and 2; BAU36962." evidence="11" ref="1 2">
    <original>A</original>
    <variation>G</variation>
    <location>
        <position position="283"/>
    </location>
</feature>
<feature type="sequence conflict" description="In Ref. 1; AAC78480 and 2; BAU36962." evidence="11" ref="1 2">
    <original>M</original>
    <variation>I</variation>
    <location>
        <position position="427"/>
    </location>
</feature>
<feature type="sequence conflict" description="In Ref. 1; AAC78480 and 2; BAU36962." evidence="11" ref="1 2">
    <original>K</original>
    <variation>Q</variation>
    <location>
        <position position="459"/>
    </location>
</feature>
<name>PAMT_CAPCH</name>
<protein>
    <recommendedName>
        <fullName evidence="9">Vanillin aminotransferase</fullName>
        <ecNumber evidence="5">2.6.1.119</ecNumber>
    </recommendedName>
    <alternativeName>
        <fullName evidence="10">Putative aminotransferase</fullName>
        <shortName>pAMT</shortName>
    </alternativeName>
</protein>
<keyword id="KW-0032">Aminotransferase</keyword>
<keyword id="KW-0175">Coiled coil</keyword>
<keyword id="KW-0663">Pyridoxal phosphate</keyword>
<keyword id="KW-0808">Transferase</keyword>
<gene>
    <name evidence="9" type="primary">VAMT</name>
</gene>
<comment type="function">
    <text evidence="5 6 8 11">Involved in the biosynthesis of capsaicinoids natural products, pungent alkaloids synthesized from phenylpropanoid intermediates in the placental tissue of chili pepper fruit acting as repellant on herbivorous mammals and conferring spiciness to hot peppers (PubMed:31323150, Ref.2). Can transfer an amine from vanillylamine to pyruvate forming vanillin and L-alanine (PubMed:24712445). Can use pyruvate or oxaloacetate, but not 2-oxoglutarate as amino group acceptors (PubMed:24712445). Is able to convert (S)-1-phenylethylamine into acetophenone in vitro (PubMed:24712445).</text>
</comment>
<comment type="catalytic activity">
    <reaction evidence="5">
        <text>vanillin + L-alanine = vanillylamine + pyruvate</text>
        <dbReference type="Rhea" id="RHEA:63828"/>
        <dbReference type="ChEBI" id="CHEBI:15361"/>
        <dbReference type="ChEBI" id="CHEBI:18346"/>
        <dbReference type="ChEBI" id="CHEBI:57972"/>
        <dbReference type="ChEBI" id="CHEBI:149596"/>
        <dbReference type="EC" id="2.6.1.119"/>
    </reaction>
    <physiologicalReaction direction="left-to-right" evidence="5">
        <dbReference type="Rhea" id="RHEA:63829"/>
    </physiologicalReaction>
</comment>
<comment type="biophysicochemical properties">
    <phDependence>
        <text evidence="5">Optimum pH is 7.0-8.0.</text>
    </phDependence>
</comment>
<comment type="pathway">
    <text evidence="5">Aromatic compound metabolism; phenylpropanoid biosynthesis.</text>
</comment>
<comment type="tissue specificity">
    <text evidence="7">Expressed in placental tissue of immature fruit.</text>
</comment>
<comment type="disruption phenotype">
    <text evidence="3 4 8">Low pungency phenotype, characterized by low levels of capsaicinoids, and accumulation of high levels of capsinoids, which are non-pungent capsaicinoid analogs.</text>
</comment>
<comment type="similarity">
    <text evidence="11">Belongs to the class-III pyridoxal-phosphate-dependent aminotransferase family.</text>
</comment>
<dbReference type="EC" id="2.6.1.119" evidence="5"/>
<dbReference type="EMBL" id="AF085149">
    <property type="protein sequence ID" value="AAC78480.1"/>
    <property type="molecule type" value="mRNA"/>
</dbReference>
<dbReference type="EMBL" id="LC032106">
    <property type="protein sequence ID" value="BAU36962.1"/>
    <property type="molecule type" value="Genomic_DNA"/>
</dbReference>
<dbReference type="EMBL" id="LC483648">
    <property type="protein sequence ID" value="BBK20873.1"/>
    <property type="molecule type" value="Genomic_DNA"/>
</dbReference>
<dbReference type="EMBL" id="LC483649">
    <property type="protein sequence ID" value="BBK20874.1"/>
    <property type="molecule type" value="Genomic_DNA"/>
</dbReference>
<dbReference type="EMBL" id="MCIT02000003">
    <property type="protein sequence ID" value="PHU21971.1"/>
    <property type="molecule type" value="Genomic_DNA"/>
</dbReference>
<dbReference type="SMR" id="O82521"/>
<dbReference type="STRING" id="80379.A0A2G3CTB3"/>
<dbReference type="BioCyc" id="MetaCyc:MONOMER-13529"/>
<dbReference type="BRENDA" id="2.6.1.119">
    <property type="organism ID" value="11996"/>
</dbReference>
<dbReference type="UniPathway" id="UPA00711"/>
<dbReference type="GO" id="GO:0004015">
    <property type="term" value="F:adenosylmethionine-8-amino-7-oxononanoate transaminase activity"/>
    <property type="evidence" value="ECO:0007669"/>
    <property type="project" value="TreeGrafter"/>
</dbReference>
<dbReference type="GO" id="GO:0030170">
    <property type="term" value="F:pyridoxal phosphate binding"/>
    <property type="evidence" value="ECO:0007669"/>
    <property type="project" value="InterPro"/>
</dbReference>
<dbReference type="GO" id="GO:0008483">
    <property type="term" value="F:transaminase activity"/>
    <property type="evidence" value="ECO:0000314"/>
    <property type="project" value="UniProtKB"/>
</dbReference>
<dbReference type="GO" id="GO:0009821">
    <property type="term" value="P:alkaloid biosynthetic process"/>
    <property type="evidence" value="ECO:0000314"/>
    <property type="project" value="UniProtKB"/>
</dbReference>
<dbReference type="GO" id="GO:0009102">
    <property type="term" value="P:biotin biosynthetic process"/>
    <property type="evidence" value="ECO:0007669"/>
    <property type="project" value="TreeGrafter"/>
</dbReference>
<dbReference type="GO" id="GO:0009448">
    <property type="term" value="P:gamma-aminobutyric acid metabolic process"/>
    <property type="evidence" value="ECO:0007669"/>
    <property type="project" value="TreeGrafter"/>
</dbReference>
<dbReference type="GO" id="GO:0009699">
    <property type="term" value="P:phenylpropanoid biosynthetic process"/>
    <property type="evidence" value="ECO:0007669"/>
    <property type="project" value="UniProtKB-UniPathway"/>
</dbReference>
<dbReference type="CDD" id="cd00610">
    <property type="entry name" value="OAT_like"/>
    <property type="match status" value="1"/>
</dbReference>
<dbReference type="FunFam" id="3.40.640.10:FF:000014">
    <property type="entry name" value="Adenosylmethionine-8-amino-7-oxononanoate aminotransferase, probable"/>
    <property type="match status" value="1"/>
</dbReference>
<dbReference type="Gene3D" id="3.90.1150.10">
    <property type="entry name" value="Aspartate Aminotransferase, domain 1"/>
    <property type="match status" value="1"/>
</dbReference>
<dbReference type="Gene3D" id="3.40.640.10">
    <property type="entry name" value="Type I PLP-dependent aspartate aminotransferase-like (Major domain)"/>
    <property type="match status" value="1"/>
</dbReference>
<dbReference type="InterPro" id="IPR005814">
    <property type="entry name" value="Aminotrans_3"/>
</dbReference>
<dbReference type="InterPro" id="IPR049704">
    <property type="entry name" value="Aminotrans_3_PPA_site"/>
</dbReference>
<dbReference type="InterPro" id="IPR015424">
    <property type="entry name" value="PyrdxlP-dep_Trfase"/>
</dbReference>
<dbReference type="InterPro" id="IPR015421">
    <property type="entry name" value="PyrdxlP-dep_Trfase_major"/>
</dbReference>
<dbReference type="InterPro" id="IPR015422">
    <property type="entry name" value="PyrdxlP-dep_Trfase_small"/>
</dbReference>
<dbReference type="NCBIfam" id="NF004767">
    <property type="entry name" value="PRK06105.1"/>
    <property type="match status" value="1"/>
</dbReference>
<dbReference type="PANTHER" id="PTHR42684">
    <property type="entry name" value="ADENOSYLMETHIONINE-8-AMINO-7-OXONONANOATE AMINOTRANSFERASE"/>
    <property type="match status" value="1"/>
</dbReference>
<dbReference type="PANTHER" id="PTHR42684:SF10">
    <property type="entry name" value="GAMMA AMINOBUTYRATE TRANSAMINASE 2"/>
    <property type="match status" value="1"/>
</dbReference>
<dbReference type="Pfam" id="PF00202">
    <property type="entry name" value="Aminotran_3"/>
    <property type="match status" value="1"/>
</dbReference>
<dbReference type="SUPFAM" id="SSF53383">
    <property type="entry name" value="PLP-dependent transferases"/>
    <property type="match status" value="1"/>
</dbReference>
<dbReference type="PROSITE" id="PS00600">
    <property type="entry name" value="AA_TRANSFER_CLASS_3"/>
    <property type="match status" value="1"/>
</dbReference>
<organism>
    <name type="scientific">Capsicum chinense</name>
    <name type="common">Scotch bonnet</name>
    <name type="synonym">Bonnet pepper</name>
    <dbReference type="NCBI Taxonomy" id="80379"/>
    <lineage>
        <taxon>Eukaryota</taxon>
        <taxon>Viridiplantae</taxon>
        <taxon>Streptophyta</taxon>
        <taxon>Embryophyta</taxon>
        <taxon>Tracheophyta</taxon>
        <taxon>Spermatophyta</taxon>
        <taxon>Magnoliopsida</taxon>
        <taxon>eudicotyledons</taxon>
        <taxon>Gunneridae</taxon>
        <taxon>Pentapetalae</taxon>
        <taxon>asterids</taxon>
        <taxon>lamiids</taxon>
        <taxon>Solanales</taxon>
        <taxon>Solanaceae</taxon>
        <taxon>Solanoideae</taxon>
        <taxon>Capsiceae</taxon>
        <taxon>Capsicum</taxon>
    </lineage>
</organism>